<comment type="subcellular location">
    <subcellularLocation>
        <location evidence="1">Endosome membrane</location>
        <topology evidence="3">Multi-pass membrane protein</topology>
    </subcellularLocation>
    <subcellularLocation>
        <location evidence="2">Golgi apparatus membrane</location>
        <topology evidence="3">Multi-pass membrane protein</topology>
    </subcellularLocation>
</comment>
<comment type="domain">
    <text evidence="2">The C-terminal KXD/E motif functions as a Golgi retention signal, certainly through the binding to the COP1 coatomer.</text>
</comment>
<comment type="similarity">
    <text>Belongs to the nonaspanin (TM9SF) (TC 9.A.2) family.</text>
</comment>
<organism evidence="9">
    <name type="scientific">Arabidopsis thaliana</name>
    <name type="common">Mouse-ear cress</name>
    <dbReference type="NCBI Taxonomy" id="3702"/>
    <lineage>
        <taxon>Eukaryota</taxon>
        <taxon>Viridiplantae</taxon>
        <taxon>Streptophyta</taxon>
        <taxon>Embryophyta</taxon>
        <taxon>Tracheophyta</taxon>
        <taxon>Spermatophyta</taxon>
        <taxon>Magnoliopsida</taxon>
        <taxon>eudicotyledons</taxon>
        <taxon>Gunneridae</taxon>
        <taxon>Pentapetalae</taxon>
        <taxon>rosids</taxon>
        <taxon>malvids</taxon>
        <taxon>Brassicales</taxon>
        <taxon>Brassicaceae</taxon>
        <taxon>Camelineae</taxon>
        <taxon>Arabidopsis</taxon>
    </lineage>
</organism>
<gene>
    <name evidence="4" type="primary">TMN3</name>
    <name evidence="5" type="synonym">EMP9</name>
    <name evidence="7" type="ordered locus">At2g01970</name>
    <name evidence="8" type="ORF">F14H20.4</name>
</gene>
<proteinExistence type="evidence at transcript level"/>
<keyword id="KW-0967">Endosome</keyword>
<keyword id="KW-0333">Golgi apparatus</keyword>
<keyword id="KW-0472">Membrane</keyword>
<keyword id="KW-1185">Reference proteome</keyword>
<keyword id="KW-0732">Signal</keyword>
<keyword id="KW-0812">Transmembrane</keyword>
<keyword id="KW-1133">Transmembrane helix</keyword>
<feature type="signal peptide" evidence="3">
    <location>
        <begin position="1"/>
        <end position="19"/>
    </location>
</feature>
<feature type="chain" id="PRO_0000431260" description="Transmembrane 9 superfamily member 3" evidence="3">
    <location>
        <begin position="20"/>
        <end position="592"/>
    </location>
</feature>
<feature type="topological domain" description="Lumenal" evidence="6">
    <location>
        <begin position="20"/>
        <end position="229"/>
    </location>
</feature>
<feature type="transmembrane region" description="Helical; Name=1" evidence="3">
    <location>
        <begin position="230"/>
        <end position="250"/>
    </location>
</feature>
<feature type="topological domain" description="Cytoplasmic" evidence="6">
    <location>
        <begin position="251"/>
        <end position="302"/>
    </location>
</feature>
<feature type="transmembrane region" description="Helical; Name=2" evidence="3">
    <location>
        <begin position="303"/>
        <end position="323"/>
    </location>
</feature>
<feature type="topological domain" description="Lumenal" evidence="6">
    <location>
        <begin position="324"/>
        <end position="325"/>
    </location>
</feature>
<feature type="transmembrane region" description="Helical; Name=3" evidence="3">
    <location>
        <begin position="326"/>
        <end position="346"/>
    </location>
</feature>
<feature type="topological domain" description="Cytoplasmic" evidence="6">
    <location>
        <begin position="347"/>
        <end position="365"/>
    </location>
</feature>
<feature type="transmembrane region" description="Helical; Name=4" evidence="3">
    <location>
        <begin position="366"/>
        <end position="386"/>
    </location>
</feature>
<feature type="topological domain" description="Lumenal" evidence="6">
    <location>
        <begin position="387"/>
        <end position="397"/>
    </location>
</feature>
<feature type="transmembrane region" description="Helical; Name=5" evidence="3">
    <location>
        <begin position="398"/>
        <end position="418"/>
    </location>
</feature>
<feature type="topological domain" description="Cytoplasmic" evidence="6">
    <location>
        <begin position="419"/>
        <end position="452"/>
    </location>
</feature>
<feature type="transmembrane region" description="Helical; Name=6" evidence="3">
    <location>
        <begin position="453"/>
        <end position="473"/>
    </location>
</feature>
<feature type="topological domain" description="Lumenal" evidence="6">
    <location>
        <begin position="474"/>
        <end position="485"/>
    </location>
</feature>
<feature type="transmembrane region" description="Helical; Name=7" evidence="3">
    <location>
        <begin position="486"/>
        <end position="506"/>
    </location>
</feature>
<feature type="topological domain" description="Cytoplasmic" evidence="6">
    <location>
        <begin position="507"/>
        <end position="521"/>
    </location>
</feature>
<feature type="transmembrane region" description="Helical; Name=8" evidence="3">
    <location>
        <begin position="522"/>
        <end position="542"/>
    </location>
</feature>
<feature type="topological domain" description="Lumenal" evidence="6">
    <location>
        <begin position="543"/>
        <end position="553"/>
    </location>
</feature>
<feature type="transmembrane region" description="Helical; Name=9" evidence="3">
    <location>
        <begin position="554"/>
        <end position="574"/>
    </location>
</feature>
<feature type="topological domain" description="Cytoplasmic" evidence="6">
    <location>
        <begin position="575"/>
        <end position="592"/>
    </location>
</feature>
<feature type="short sequence motif" description="Endoplasmic reticulum export signal" evidence="2">
    <location>
        <begin position="581"/>
        <end position="586"/>
    </location>
</feature>
<feature type="short sequence motif" description="Golgi retention signal" evidence="2">
    <location>
        <begin position="590"/>
        <end position="592"/>
    </location>
</feature>
<sequence>MRLPTTLLLFIGALIFSGAGTVRSDASDHRYKDGDSVPLYANKVGPFHNPSETYRYFDLPFCIPEGVKDKKEALGEVLNGDRLVSAPYKLNFRDEKDSEVYCKKKLSREEVEHFRRAVEKDYYFQMYYDDLPIWGFIGKVDKESKSDPSEFKYFLYKHIQFEILYNKDRVIEINARMDPHSLVDLTEDKEVDAEFMYTVKWKETETSFEKRMDKYAMSSSLPHHLEIHWFSIINSCVTVLLLTGFLATILMRVLKNDFMKYAQDEEAADDQEETGWKYIHGDVFRFPKNKSLFAASLGSGTQLFTLTIFIFMLSLVGVFYPYNRGALFTALVVIYALTSGIAGYTASSFYCQLEGKNWVRNLLLTGGLFCGPLFLTFCFLNTVAIAYSATAALPFGTIIVIVLIWTLVTSPLLVLGGIAGKNSKAEFQAPVRTTKYPREIPPLPWYRSAVPQMAMAGFLPFSAIYIELYYIFASVWGHRIYTIYSILFIVFIILLIVTAFITVALTYFQLAAEDHEWWWRSFLCGGSTGLFIYAYCLYYYYARSDMSGFMQTSFFFGYMACICYGFFLMLGTVGFRAALLFVRHIYRSIKCE</sequence>
<accession>Q9ZPS7</accession>
<accession>B9DHM0</accession>
<accession>Q56X26</accession>
<protein>
    <recommendedName>
        <fullName evidence="6">Transmembrane 9 superfamily member 3</fullName>
    </recommendedName>
    <alternativeName>
        <fullName evidence="5">Endomembrane protein 9</fullName>
    </alternativeName>
    <alternativeName>
        <fullName evidence="4">Transmembrane nine protein 3</fullName>
        <shortName evidence="4">AtTMN3</shortName>
    </alternativeName>
</protein>
<reference key="1">
    <citation type="journal article" date="1999" name="Nature">
        <title>Sequence and analysis of chromosome 2 of the plant Arabidopsis thaliana.</title>
        <authorList>
            <person name="Lin X."/>
            <person name="Kaul S."/>
            <person name="Rounsley S.D."/>
            <person name="Shea T.P."/>
            <person name="Benito M.-I."/>
            <person name="Town C.D."/>
            <person name="Fujii C.Y."/>
            <person name="Mason T.M."/>
            <person name="Bowman C.L."/>
            <person name="Barnstead M.E."/>
            <person name="Feldblyum T.V."/>
            <person name="Buell C.R."/>
            <person name="Ketchum K.A."/>
            <person name="Lee J.J."/>
            <person name="Ronning C.M."/>
            <person name="Koo H.L."/>
            <person name="Moffat K.S."/>
            <person name="Cronin L.A."/>
            <person name="Shen M."/>
            <person name="Pai G."/>
            <person name="Van Aken S."/>
            <person name="Umayam L."/>
            <person name="Tallon L.J."/>
            <person name="Gill J.E."/>
            <person name="Adams M.D."/>
            <person name="Carrera A.J."/>
            <person name="Creasy T.H."/>
            <person name="Goodman H.M."/>
            <person name="Somerville C.R."/>
            <person name="Copenhaver G.P."/>
            <person name="Preuss D."/>
            <person name="Nierman W.C."/>
            <person name="White O."/>
            <person name="Eisen J.A."/>
            <person name="Salzberg S.L."/>
            <person name="Fraser C.M."/>
            <person name="Venter J.C."/>
        </authorList>
    </citation>
    <scope>NUCLEOTIDE SEQUENCE [LARGE SCALE GENOMIC DNA]</scope>
    <source>
        <strain>cv. Columbia</strain>
    </source>
</reference>
<reference key="2">
    <citation type="journal article" date="2017" name="Plant J.">
        <title>Araport11: a complete reannotation of the Arabidopsis thaliana reference genome.</title>
        <authorList>
            <person name="Cheng C.Y."/>
            <person name="Krishnakumar V."/>
            <person name="Chan A.P."/>
            <person name="Thibaud-Nissen F."/>
            <person name="Schobel S."/>
            <person name="Town C.D."/>
        </authorList>
    </citation>
    <scope>GENOME REANNOTATION</scope>
    <source>
        <strain>cv. Columbia</strain>
    </source>
</reference>
<reference key="3">
    <citation type="journal article" date="2003" name="Science">
        <title>Empirical analysis of transcriptional activity in the Arabidopsis genome.</title>
        <authorList>
            <person name="Yamada K."/>
            <person name="Lim J."/>
            <person name="Dale J.M."/>
            <person name="Chen H."/>
            <person name="Shinn P."/>
            <person name="Palm C.J."/>
            <person name="Southwick A.M."/>
            <person name="Wu H.C."/>
            <person name="Kim C.J."/>
            <person name="Nguyen M."/>
            <person name="Pham P.K."/>
            <person name="Cheuk R.F."/>
            <person name="Karlin-Newmann G."/>
            <person name="Liu S.X."/>
            <person name="Lam B."/>
            <person name="Sakano H."/>
            <person name="Wu T."/>
            <person name="Yu G."/>
            <person name="Miranda M."/>
            <person name="Quach H.L."/>
            <person name="Tripp M."/>
            <person name="Chang C.H."/>
            <person name="Lee J.M."/>
            <person name="Toriumi M.J."/>
            <person name="Chan M.M."/>
            <person name="Tang C.C."/>
            <person name="Onodera C.S."/>
            <person name="Deng J.M."/>
            <person name="Akiyama K."/>
            <person name="Ansari Y."/>
            <person name="Arakawa T."/>
            <person name="Banh J."/>
            <person name="Banno F."/>
            <person name="Bowser L."/>
            <person name="Brooks S.Y."/>
            <person name="Carninci P."/>
            <person name="Chao Q."/>
            <person name="Choy N."/>
            <person name="Enju A."/>
            <person name="Goldsmith A.D."/>
            <person name="Gurjal M."/>
            <person name="Hansen N.F."/>
            <person name="Hayashizaki Y."/>
            <person name="Johnson-Hopson C."/>
            <person name="Hsuan V.W."/>
            <person name="Iida K."/>
            <person name="Karnes M."/>
            <person name="Khan S."/>
            <person name="Koesema E."/>
            <person name="Ishida J."/>
            <person name="Jiang P.X."/>
            <person name="Jones T."/>
            <person name="Kawai J."/>
            <person name="Kamiya A."/>
            <person name="Meyers C."/>
            <person name="Nakajima M."/>
            <person name="Narusaka M."/>
            <person name="Seki M."/>
            <person name="Sakurai T."/>
            <person name="Satou M."/>
            <person name="Tamse R."/>
            <person name="Vaysberg M."/>
            <person name="Wallender E.K."/>
            <person name="Wong C."/>
            <person name="Yamamura Y."/>
            <person name="Yuan S."/>
            <person name="Shinozaki K."/>
            <person name="Davis R.W."/>
            <person name="Theologis A."/>
            <person name="Ecker J.R."/>
        </authorList>
    </citation>
    <scope>NUCLEOTIDE SEQUENCE [LARGE SCALE MRNA]</scope>
    <source>
        <strain>cv. Columbia</strain>
    </source>
</reference>
<reference key="4">
    <citation type="submission" date="2006-07" db="EMBL/GenBank/DDBJ databases">
        <title>Large-scale analysis of RIKEN Arabidopsis full-length (RAFL) cDNAs.</title>
        <authorList>
            <person name="Totoki Y."/>
            <person name="Seki M."/>
            <person name="Ishida J."/>
            <person name="Nakajima M."/>
            <person name="Enju A."/>
            <person name="Kamiya A."/>
            <person name="Narusaka M."/>
            <person name="Shin-i T."/>
            <person name="Nakagawa M."/>
            <person name="Sakamoto N."/>
            <person name="Oishi K."/>
            <person name="Kohara Y."/>
            <person name="Kobayashi M."/>
            <person name="Toyoda A."/>
            <person name="Sakaki Y."/>
            <person name="Sakurai T."/>
            <person name="Iida K."/>
            <person name="Akiyama K."/>
            <person name="Satou M."/>
            <person name="Toyoda T."/>
            <person name="Konagaya A."/>
            <person name="Carninci P."/>
            <person name="Kawai J."/>
            <person name="Hayashizaki Y."/>
            <person name="Shinozaki K."/>
        </authorList>
    </citation>
    <scope>NUCLEOTIDE SEQUENCE [LARGE SCALE MRNA]</scope>
    <source>
        <strain>cv. Columbia</strain>
    </source>
</reference>
<reference key="5">
    <citation type="journal article" date="2009" name="DNA Res.">
        <title>Analysis of multiple occurrences of alternative splicing events in Arabidopsis thaliana using novel sequenced full-length cDNAs.</title>
        <authorList>
            <person name="Iida K."/>
            <person name="Fukami-Kobayashi K."/>
            <person name="Toyoda A."/>
            <person name="Sakaki Y."/>
            <person name="Kobayashi M."/>
            <person name="Seki M."/>
            <person name="Shinozaki K."/>
        </authorList>
    </citation>
    <scope>NUCLEOTIDE SEQUENCE [LARGE SCALE MRNA] OF 282-592</scope>
    <source>
        <strain>cv. Columbia</strain>
        <tissue>Flower</tissue>
        <tissue>Silique</tissue>
    </source>
</reference>
<reference key="6">
    <citation type="journal article" date="2010" name="Physiol. Plantarum">
        <title>Transmembrane nine proteins in yeast and Arabidopsis affect cellular metal contents without changing vacuolar morphology.</title>
        <authorList>
            <person name="Hegelund J.N."/>
            <person name="Jahn T.P."/>
            <person name="Baekgaard L."/>
            <person name="Palmgren M.G."/>
            <person name="Schjoerring J.K."/>
        </authorList>
    </citation>
    <scope>GENE FAMILY</scope>
    <scope>NOMENCLATURE</scope>
</reference>
<reference key="7">
    <citation type="journal article" date="2012" name="Plant Cell">
        <title>The Golgi-localized Arabidopsis endomembrane protein12 contains both endoplasmic reticulum export and Golgi retention signals at its C terminus.</title>
        <authorList>
            <person name="Gao C."/>
            <person name="Yu C.K."/>
            <person name="Qu S."/>
            <person name="San M.W."/>
            <person name="Li K.Y."/>
            <person name="Lo S.W."/>
            <person name="Jiang L."/>
        </authorList>
    </citation>
    <scope>GENE FAMILY</scope>
    <scope>NOMENCLATURE</scope>
</reference>
<name>TMN3_ARATH</name>
<evidence type="ECO:0000250" key="1">
    <source>
        <dbReference type="UniProtKB" id="P32802"/>
    </source>
</evidence>
<evidence type="ECO:0000250" key="2">
    <source>
        <dbReference type="UniProtKB" id="Q940G0"/>
    </source>
</evidence>
<evidence type="ECO:0000255" key="3"/>
<evidence type="ECO:0000303" key="4">
    <source>
    </source>
</evidence>
<evidence type="ECO:0000303" key="5">
    <source>
    </source>
</evidence>
<evidence type="ECO:0000305" key="6"/>
<evidence type="ECO:0000312" key="7">
    <source>
        <dbReference type="Araport" id="AT2G01970"/>
    </source>
</evidence>
<evidence type="ECO:0000312" key="8">
    <source>
        <dbReference type="EMBL" id="AAD20090.1"/>
    </source>
</evidence>
<evidence type="ECO:0000312" key="9">
    <source>
        <dbReference type="Proteomes" id="UP000006548"/>
    </source>
</evidence>
<dbReference type="EMBL" id="AC006532">
    <property type="protein sequence ID" value="AAD20090.1"/>
    <property type="molecule type" value="Genomic_DNA"/>
</dbReference>
<dbReference type="EMBL" id="CP002685">
    <property type="protein sequence ID" value="AEC05528.1"/>
    <property type="molecule type" value="Genomic_DNA"/>
</dbReference>
<dbReference type="EMBL" id="AY058869">
    <property type="protein sequence ID" value="AAL24256.1"/>
    <property type="molecule type" value="mRNA"/>
</dbReference>
<dbReference type="EMBL" id="AK221852">
    <property type="protein sequence ID" value="BAD94118.1"/>
    <property type="molecule type" value="mRNA"/>
</dbReference>
<dbReference type="EMBL" id="AK226487">
    <property type="protein sequence ID" value="BAE98629.1"/>
    <property type="molecule type" value="mRNA"/>
</dbReference>
<dbReference type="EMBL" id="AK317573">
    <property type="protein sequence ID" value="BAH20237.1"/>
    <property type="molecule type" value="mRNA"/>
</dbReference>
<dbReference type="PIR" id="D84431">
    <property type="entry name" value="D84431"/>
</dbReference>
<dbReference type="RefSeq" id="NP_178306.1">
    <property type="nucleotide sequence ID" value="NM_126258.3"/>
</dbReference>
<dbReference type="BioGRID" id="131">
    <property type="interactions" value="54"/>
</dbReference>
<dbReference type="FunCoup" id="Q9ZPS7">
    <property type="interactions" value="3791"/>
</dbReference>
<dbReference type="IntAct" id="Q9ZPS7">
    <property type="interactions" value="54"/>
</dbReference>
<dbReference type="STRING" id="3702.Q9ZPS7"/>
<dbReference type="PaxDb" id="3702-AT2G01970.1"/>
<dbReference type="ProteomicsDB" id="234451"/>
<dbReference type="EnsemblPlants" id="AT2G01970.1">
    <property type="protein sequence ID" value="AT2G01970.1"/>
    <property type="gene ID" value="AT2G01970"/>
</dbReference>
<dbReference type="GeneID" id="814728"/>
<dbReference type="Gramene" id="AT2G01970.1">
    <property type="protein sequence ID" value="AT2G01970.1"/>
    <property type="gene ID" value="AT2G01970"/>
</dbReference>
<dbReference type="KEGG" id="ath:AT2G01970"/>
<dbReference type="Araport" id="AT2G01970"/>
<dbReference type="TAIR" id="AT2G01970"/>
<dbReference type="eggNOG" id="KOG1277">
    <property type="taxonomic scope" value="Eukaryota"/>
</dbReference>
<dbReference type="HOGENOM" id="CLU_010714_0_2_1"/>
<dbReference type="InParanoid" id="Q9ZPS7"/>
<dbReference type="OMA" id="MEKYAMS"/>
<dbReference type="OrthoDB" id="1666796at2759"/>
<dbReference type="PhylomeDB" id="Q9ZPS7"/>
<dbReference type="CD-CODE" id="4299E36E">
    <property type="entry name" value="Nucleolus"/>
</dbReference>
<dbReference type="PRO" id="PR:Q9ZPS7"/>
<dbReference type="Proteomes" id="UP000006548">
    <property type="component" value="Chromosome 2"/>
</dbReference>
<dbReference type="ExpressionAtlas" id="Q9ZPS7">
    <property type="expression patterns" value="baseline and differential"/>
</dbReference>
<dbReference type="GO" id="GO:0005768">
    <property type="term" value="C:endosome"/>
    <property type="evidence" value="ECO:0007005"/>
    <property type="project" value="TAIR"/>
</dbReference>
<dbReference type="GO" id="GO:0010008">
    <property type="term" value="C:endosome membrane"/>
    <property type="evidence" value="ECO:0007669"/>
    <property type="project" value="UniProtKB-SubCell"/>
</dbReference>
<dbReference type="GO" id="GO:0005794">
    <property type="term" value="C:Golgi apparatus"/>
    <property type="evidence" value="ECO:0007005"/>
    <property type="project" value="TAIR"/>
</dbReference>
<dbReference type="GO" id="GO:0000139">
    <property type="term" value="C:Golgi membrane"/>
    <property type="evidence" value="ECO:0007669"/>
    <property type="project" value="UniProtKB-SubCell"/>
</dbReference>
<dbReference type="GO" id="GO:0000138">
    <property type="term" value="C:Golgi trans cisterna"/>
    <property type="evidence" value="ECO:0007005"/>
    <property type="project" value="TAIR"/>
</dbReference>
<dbReference type="GO" id="GO:0005739">
    <property type="term" value="C:mitochondrion"/>
    <property type="evidence" value="ECO:0007005"/>
    <property type="project" value="TAIR"/>
</dbReference>
<dbReference type="GO" id="GO:0009505">
    <property type="term" value="C:plant-type cell wall"/>
    <property type="evidence" value="ECO:0007005"/>
    <property type="project" value="TAIR"/>
</dbReference>
<dbReference type="GO" id="GO:0000325">
    <property type="term" value="C:plant-type vacuole"/>
    <property type="evidence" value="ECO:0007005"/>
    <property type="project" value="TAIR"/>
</dbReference>
<dbReference type="GO" id="GO:0009506">
    <property type="term" value="C:plasmodesma"/>
    <property type="evidence" value="ECO:0007005"/>
    <property type="project" value="TAIR"/>
</dbReference>
<dbReference type="GO" id="GO:0005802">
    <property type="term" value="C:trans-Golgi network"/>
    <property type="evidence" value="ECO:0007005"/>
    <property type="project" value="TAIR"/>
</dbReference>
<dbReference type="InterPro" id="IPR004240">
    <property type="entry name" value="EMP70"/>
</dbReference>
<dbReference type="InterPro" id="IPR036259">
    <property type="entry name" value="MFS_trans_sf"/>
</dbReference>
<dbReference type="PANTHER" id="PTHR10766:SF123">
    <property type="entry name" value="TRANSMEMBRANE 9 SUPERFAMILY MEMBER 3"/>
    <property type="match status" value="1"/>
</dbReference>
<dbReference type="PANTHER" id="PTHR10766">
    <property type="entry name" value="TRANSMEMBRANE 9 SUPERFAMILY PROTEIN"/>
    <property type="match status" value="1"/>
</dbReference>
<dbReference type="Pfam" id="PF02990">
    <property type="entry name" value="EMP70"/>
    <property type="match status" value="1"/>
</dbReference>
<dbReference type="SUPFAM" id="SSF103473">
    <property type="entry name" value="MFS general substrate transporter"/>
    <property type="match status" value="1"/>
</dbReference>